<accession>P69213</accession>
<accession>P77412</accession>
<dbReference type="EMBL" id="AE005174">
    <property type="protein sequence ID" value="AAG56587.1"/>
    <property type="molecule type" value="Genomic_DNA"/>
</dbReference>
<dbReference type="EMBL" id="BA000007">
    <property type="protein sequence ID" value="BAB35729.1"/>
    <property type="molecule type" value="Genomic_DNA"/>
</dbReference>
<dbReference type="PIR" id="B90917">
    <property type="entry name" value="B90917"/>
</dbReference>
<dbReference type="PIR" id="G85765">
    <property type="entry name" value="G85765"/>
</dbReference>
<dbReference type="RefSeq" id="NP_310333.1">
    <property type="nucleotide sequence ID" value="NC_002695.1"/>
</dbReference>
<dbReference type="RefSeq" id="WP_000276149.1">
    <property type="nucleotide sequence ID" value="NZ_VOAI01000007.1"/>
</dbReference>
<dbReference type="SMR" id="P69213"/>
<dbReference type="STRING" id="155864.Z2594"/>
<dbReference type="TCDB" id="2.A.7.1.9">
    <property type="family name" value="the drug/metabolite transporter (dmt) superfamily"/>
</dbReference>
<dbReference type="GeneID" id="913399"/>
<dbReference type="GeneID" id="93775748"/>
<dbReference type="KEGG" id="ece:Z2594"/>
<dbReference type="KEGG" id="ecs:ECs_2306"/>
<dbReference type="PATRIC" id="fig|386585.9.peg.2416"/>
<dbReference type="eggNOG" id="COG2076">
    <property type="taxonomic scope" value="Bacteria"/>
</dbReference>
<dbReference type="HOGENOM" id="CLU_133067_0_0_6"/>
<dbReference type="OMA" id="MRSWIYL"/>
<dbReference type="Proteomes" id="UP000000558">
    <property type="component" value="Chromosome"/>
</dbReference>
<dbReference type="Proteomes" id="UP000002519">
    <property type="component" value="Chromosome"/>
</dbReference>
<dbReference type="GO" id="GO:0005886">
    <property type="term" value="C:plasma membrane"/>
    <property type="evidence" value="ECO:0007669"/>
    <property type="project" value="UniProtKB-SubCell"/>
</dbReference>
<dbReference type="GO" id="GO:0015199">
    <property type="term" value="F:amino-acid betaine transmembrane transporter activity"/>
    <property type="evidence" value="ECO:0007669"/>
    <property type="project" value="TreeGrafter"/>
</dbReference>
<dbReference type="GO" id="GO:0015297">
    <property type="term" value="F:antiporter activity"/>
    <property type="evidence" value="ECO:0007669"/>
    <property type="project" value="TreeGrafter"/>
</dbReference>
<dbReference type="GO" id="GO:0015220">
    <property type="term" value="F:choline transmembrane transporter activity"/>
    <property type="evidence" value="ECO:0007669"/>
    <property type="project" value="TreeGrafter"/>
</dbReference>
<dbReference type="GO" id="GO:0015606">
    <property type="term" value="F:spermidine transmembrane transporter activity"/>
    <property type="evidence" value="ECO:0007669"/>
    <property type="project" value="UniProtKB-UniRule"/>
</dbReference>
<dbReference type="GO" id="GO:0031460">
    <property type="term" value="P:glycine betaine transport"/>
    <property type="evidence" value="ECO:0007669"/>
    <property type="project" value="TreeGrafter"/>
</dbReference>
<dbReference type="FunFam" id="1.10.3730.20:FF:000001">
    <property type="entry name" value="Quaternary ammonium compound resistance transporter SugE"/>
    <property type="match status" value="1"/>
</dbReference>
<dbReference type="Gene3D" id="1.10.3730.20">
    <property type="match status" value="1"/>
</dbReference>
<dbReference type="HAMAP" id="MF_01598">
    <property type="entry name" value="MdtJ"/>
    <property type="match status" value="1"/>
</dbReference>
<dbReference type="InterPro" id="IPR000390">
    <property type="entry name" value="Small_drug/metabolite_transptr"/>
</dbReference>
<dbReference type="InterPro" id="IPR045324">
    <property type="entry name" value="Small_multidrug_res"/>
</dbReference>
<dbReference type="InterPro" id="IPR023740">
    <property type="entry name" value="Spermidine_export_MdtJ"/>
</dbReference>
<dbReference type="NCBIfam" id="NF007767">
    <property type="entry name" value="PRK10452.1"/>
    <property type="match status" value="1"/>
</dbReference>
<dbReference type="PANTHER" id="PTHR30561">
    <property type="entry name" value="SMR FAMILY PROTON-DEPENDENT DRUG EFFLUX TRANSPORTER SUGE"/>
    <property type="match status" value="1"/>
</dbReference>
<dbReference type="PANTHER" id="PTHR30561:SF2">
    <property type="entry name" value="SPERMIDINE EXPORT PROTEIN MDTJ"/>
    <property type="match status" value="1"/>
</dbReference>
<dbReference type="Pfam" id="PF00893">
    <property type="entry name" value="Multi_Drug_Res"/>
    <property type="match status" value="1"/>
</dbReference>
<dbReference type="SUPFAM" id="SSF103481">
    <property type="entry name" value="Multidrug resistance efflux transporter EmrE"/>
    <property type="match status" value="1"/>
</dbReference>
<proteinExistence type="inferred from homology"/>
<feature type="chain" id="PRO_0000108081" description="Spermidine export protein MdtJ">
    <location>
        <begin position="1"/>
        <end position="121"/>
    </location>
</feature>
<feature type="topological domain" description="Cytoplasmic" evidence="2">
    <location>
        <position position="1"/>
    </location>
</feature>
<feature type="transmembrane region" description="Helical" evidence="2">
    <location>
        <begin position="2"/>
        <end position="22"/>
    </location>
</feature>
<feature type="topological domain" description="Periplasmic" evidence="2">
    <location>
        <begin position="23"/>
        <end position="31"/>
    </location>
</feature>
<feature type="transmembrane region" description="Helical" evidence="2">
    <location>
        <begin position="32"/>
        <end position="52"/>
    </location>
</feature>
<feature type="topological domain" description="Cytoplasmic" evidence="2">
    <location>
        <begin position="53"/>
        <end position="54"/>
    </location>
</feature>
<feature type="transmembrane region" description="Helical" evidence="2">
    <location>
        <begin position="55"/>
        <end position="75"/>
    </location>
</feature>
<feature type="topological domain" description="Periplasmic" evidence="2">
    <location>
        <begin position="76"/>
        <end position="81"/>
    </location>
</feature>
<feature type="transmembrane region" description="Helical" evidence="2">
    <location>
        <begin position="82"/>
        <end position="102"/>
    </location>
</feature>
<feature type="topological domain" description="Cytoplasmic" evidence="2">
    <location>
        <begin position="103"/>
        <end position="121"/>
    </location>
</feature>
<evidence type="ECO:0000250" key="1"/>
<evidence type="ECO:0000255" key="2"/>
<evidence type="ECO:0000255" key="3">
    <source>
        <dbReference type="HAMAP-Rule" id="MF_01598"/>
    </source>
</evidence>
<organism>
    <name type="scientific">Escherichia coli O157:H7</name>
    <dbReference type="NCBI Taxonomy" id="83334"/>
    <lineage>
        <taxon>Bacteria</taxon>
        <taxon>Pseudomonadati</taxon>
        <taxon>Pseudomonadota</taxon>
        <taxon>Gammaproteobacteria</taxon>
        <taxon>Enterobacterales</taxon>
        <taxon>Enterobacteriaceae</taxon>
        <taxon>Escherichia</taxon>
    </lineage>
</organism>
<keyword id="KW-0997">Cell inner membrane</keyword>
<keyword id="KW-1003">Cell membrane</keyword>
<keyword id="KW-0472">Membrane</keyword>
<keyword id="KW-1185">Reference proteome</keyword>
<keyword id="KW-0812">Transmembrane</keyword>
<keyword id="KW-1133">Transmembrane helix</keyword>
<keyword id="KW-0813">Transport</keyword>
<comment type="function">
    <text evidence="1">Catalyzes the excretion of spermidine.</text>
</comment>
<comment type="subunit">
    <text evidence="1">Forms a complex with MdtI.</text>
</comment>
<comment type="subcellular location">
    <subcellularLocation>
        <location evidence="1">Cell inner membrane</location>
        <topology evidence="1">Multi-pass membrane protein</topology>
    </subcellularLocation>
</comment>
<comment type="similarity">
    <text evidence="3">Belongs to the drug/metabolite transporter (DMT) superfamily. Small multidrug resistance (SMR) (TC 2.A.7.1) family. MdtJ subfamily.</text>
</comment>
<sequence length="121" mass="13115">MYIYWILLGLAIATEITGTLSMKWASVSEGNGGFILMLVMISLSYIFLSFAVKKIALGVAYALWEGIGILFITLFSVLLFDESLSLMKIAGLTTLVAGIVLIKSGTRKARKPELEVNHGAV</sequence>
<reference key="1">
    <citation type="journal article" date="2001" name="Nature">
        <title>Genome sequence of enterohaemorrhagic Escherichia coli O157:H7.</title>
        <authorList>
            <person name="Perna N.T."/>
            <person name="Plunkett G. III"/>
            <person name="Burland V."/>
            <person name="Mau B."/>
            <person name="Glasner J.D."/>
            <person name="Rose D.J."/>
            <person name="Mayhew G.F."/>
            <person name="Evans P.S."/>
            <person name="Gregor J."/>
            <person name="Kirkpatrick H.A."/>
            <person name="Posfai G."/>
            <person name="Hackett J."/>
            <person name="Klink S."/>
            <person name="Boutin A."/>
            <person name="Shao Y."/>
            <person name="Miller L."/>
            <person name="Grotbeck E.J."/>
            <person name="Davis N.W."/>
            <person name="Lim A."/>
            <person name="Dimalanta E.T."/>
            <person name="Potamousis K."/>
            <person name="Apodaca J."/>
            <person name="Anantharaman T.S."/>
            <person name="Lin J."/>
            <person name="Yen G."/>
            <person name="Schwartz D.C."/>
            <person name="Welch R.A."/>
            <person name="Blattner F.R."/>
        </authorList>
    </citation>
    <scope>NUCLEOTIDE SEQUENCE [LARGE SCALE GENOMIC DNA]</scope>
    <source>
        <strain>O157:H7 / EDL933 / ATCC 700927 / EHEC</strain>
    </source>
</reference>
<reference key="2">
    <citation type="journal article" date="2001" name="DNA Res.">
        <title>Complete genome sequence of enterohemorrhagic Escherichia coli O157:H7 and genomic comparison with a laboratory strain K-12.</title>
        <authorList>
            <person name="Hayashi T."/>
            <person name="Makino K."/>
            <person name="Ohnishi M."/>
            <person name="Kurokawa K."/>
            <person name="Ishii K."/>
            <person name="Yokoyama K."/>
            <person name="Han C.-G."/>
            <person name="Ohtsubo E."/>
            <person name="Nakayama K."/>
            <person name="Murata T."/>
            <person name="Tanaka M."/>
            <person name="Tobe T."/>
            <person name="Iida T."/>
            <person name="Takami H."/>
            <person name="Honda T."/>
            <person name="Sasakawa C."/>
            <person name="Ogasawara N."/>
            <person name="Yasunaga T."/>
            <person name="Kuhara S."/>
            <person name="Shiba T."/>
            <person name="Hattori M."/>
            <person name="Shinagawa H."/>
        </authorList>
    </citation>
    <scope>NUCLEOTIDE SEQUENCE [LARGE SCALE GENOMIC DNA]</scope>
    <source>
        <strain>O157:H7 / Sakai / RIMD 0509952 / EHEC</strain>
    </source>
</reference>
<name>MDTJ_ECO57</name>
<protein>
    <recommendedName>
        <fullName>Spermidine export protein MdtJ</fullName>
    </recommendedName>
</protein>
<gene>
    <name type="primary">mdtJ</name>
    <name type="ordered locus">Z2594</name>
    <name type="ordered locus">ECs2306</name>
</gene>